<sequence>MSDEEHHFESKADAGASKTYPQQAGTIRKNGHIVIKNRPCKVVEVSTSKTGKHGHAKCHFVAIDIFTGKKLEDIVPSSHNCDVPHVNRTDYQLIDISEDGFVSLLTENGNTKDDLRLPTDDNLLALIKDGFAEGKDLVLSVMSAMGEEQICGIKDVGPK</sequence>
<comment type="function">
    <text evidence="1">Translation factor that promotes translation elongation and termination, particularly upon ribosome stalling at specific amino acid sequence contexts (By similarity). Binds between the exit (E) and peptidyl (P) site of the ribosome and promotes rescue of stalled ribosome: specifically required for efficient translation of polyproline-containing peptides as well as other motifs that stall the ribosome (By similarity). Acts as a ribosome quality control (RQC) cofactor by joining the RQC complex to facilitate peptidyl transfer during CAT tailing step (By similarity).</text>
</comment>
<comment type="PTM">
    <text evidence="2">Lys-52 undergoes hypusination, a unique post-translational modification that consists in the addition of a butylamino group from spermidine to lysine side chain, leading to the formation of the unusual amino acid hypusine. eIF-5As are the only known proteins to undergo this modification, which is essential for their function.</text>
</comment>
<comment type="miscellaneous">
    <text>There are at least two genes for eIF-5A in tobacco: 5A1 may regulate the light-dependent translation of specific transcripts while 5A2 may be a housekeeping protein.</text>
</comment>
<comment type="similarity">
    <text evidence="4">Belongs to the eIF-5A family.</text>
</comment>
<evidence type="ECO:0000250" key="1">
    <source>
        <dbReference type="UniProtKB" id="P23301"/>
    </source>
</evidence>
<evidence type="ECO:0000250" key="2">
    <source>
        <dbReference type="UniProtKB" id="Q9XI91"/>
    </source>
</evidence>
<evidence type="ECO:0000256" key="3">
    <source>
        <dbReference type="SAM" id="MobiDB-lite"/>
    </source>
</evidence>
<evidence type="ECO:0000305" key="4"/>
<protein>
    <recommendedName>
        <fullName>Eukaryotic translation initiation factor 5A-1</fullName>
        <shortName>eIF-5A-1</shortName>
    </recommendedName>
    <alternativeName>
        <fullName>eIF-4D</fullName>
    </alternativeName>
</protein>
<organism>
    <name type="scientific">Nicotiana tabacum</name>
    <name type="common">Common tobacco</name>
    <dbReference type="NCBI Taxonomy" id="4097"/>
    <lineage>
        <taxon>Eukaryota</taxon>
        <taxon>Viridiplantae</taxon>
        <taxon>Streptophyta</taxon>
        <taxon>Embryophyta</taxon>
        <taxon>Tracheophyta</taxon>
        <taxon>Spermatophyta</taxon>
        <taxon>Magnoliopsida</taxon>
        <taxon>eudicotyledons</taxon>
        <taxon>Gunneridae</taxon>
        <taxon>Pentapetalae</taxon>
        <taxon>asterids</taxon>
        <taxon>lamiids</taxon>
        <taxon>Solanales</taxon>
        <taxon>Solanaceae</taxon>
        <taxon>Nicotianoideae</taxon>
        <taxon>Nicotianeae</taxon>
        <taxon>Nicotiana</taxon>
    </lineage>
</organism>
<name>IF5A1_TOBAC</name>
<accession>P69040</accession>
<accession>P24921</accession>
<proteinExistence type="inferred from homology"/>
<reference key="1">
    <citation type="journal article" date="1992" name="Nucleic Acids Res.">
        <title>Differential expression of genes encoding the hypusine-containing translation initiation factor, eIF-5A, in tobacco.</title>
        <authorList>
            <person name="Chamot D."/>
            <person name="Kuhlemeter C."/>
        </authorList>
    </citation>
    <scope>NUCLEOTIDE SEQUENCE [GENOMIC DNA]</scope>
    <source>
        <tissue>Leaf</tissue>
    </source>
</reference>
<gene>
    <name type="primary">EIF-5A1</name>
</gene>
<feature type="chain" id="PRO_0000142482" description="Eukaryotic translation initiation factor 5A-1">
    <location>
        <begin position="1"/>
        <end position="159"/>
    </location>
</feature>
<feature type="region of interest" description="Disordered" evidence="3">
    <location>
        <begin position="1"/>
        <end position="23"/>
    </location>
</feature>
<feature type="compositionally biased region" description="Basic and acidic residues" evidence="3">
    <location>
        <begin position="1"/>
        <end position="12"/>
    </location>
</feature>
<feature type="modified residue" description="Hypusine" evidence="2">
    <location>
        <position position="52"/>
    </location>
</feature>
<dbReference type="EMBL" id="X63543">
    <property type="protein sequence ID" value="CAA45105.1"/>
    <property type="molecule type" value="Genomic_DNA"/>
</dbReference>
<dbReference type="PIR" id="S21060">
    <property type="entry name" value="S21060"/>
</dbReference>
<dbReference type="RefSeq" id="XP_016502573.1">
    <property type="nucleotide sequence ID" value="XM_016647087.1"/>
</dbReference>
<dbReference type="SMR" id="P69040"/>
<dbReference type="STRING" id="4097.P69040"/>
<dbReference type="PaxDb" id="4097-P69040"/>
<dbReference type="KEGG" id="nta:107820748"/>
<dbReference type="OMA" id="PCKIMEL"/>
<dbReference type="OrthoDB" id="9975114at2759"/>
<dbReference type="PhylomeDB" id="P69040"/>
<dbReference type="Proteomes" id="UP000084051">
    <property type="component" value="Unplaced"/>
</dbReference>
<dbReference type="GO" id="GO:0043022">
    <property type="term" value="F:ribosome binding"/>
    <property type="evidence" value="ECO:0007669"/>
    <property type="project" value="InterPro"/>
</dbReference>
<dbReference type="GO" id="GO:0003723">
    <property type="term" value="F:RNA binding"/>
    <property type="evidence" value="ECO:0007669"/>
    <property type="project" value="InterPro"/>
</dbReference>
<dbReference type="GO" id="GO:0003746">
    <property type="term" value="F:translation elongation factor activity"/>
    <property type="evidence" value="ECO:0000318"/>
    <property type="project" value="GO_Central"/>
</dbReference>
<dbReference type="GO" id="GO:0003743">
    <property type="term" value="F:translation initiation factor activity"/>
    <property type="evidence" value="ECO:0007669"/>
    <property type="project" value="UniProtKB-KW"/>
</dbReference>
<dbReference type="GO" id="GO:0045901">
    <property type="term" value="P:positive regulation of translational elongation"/>
    <property type="evidence" value="ECO:0007669"/>
    <property type="project" value="InterPro"/>
</dbReference>
<dbReference type="GO" id="GO:0045905">
    <property type="term" value="P:positive regulation of translational termination"/>
    <property type="evidence" value="ECO:0007669"/>
    <property type="project" value="InterPro"/>
</dbReference>
<dbReference type="GO" id="GO:0006414">
    <property type="term" value="P:translational elongation"/>
    <property type="evidence" value="ECO:0000318"/>
    <property type="project" value="GO_Central"/>
</dbReference>
<dbReference type="CDD" id="cd04468">
    <property type="entry name" value="S1_eIF5A"/>
    <property type="match status" value="1"/>
</dbReference>
<dbReference type="FunFam" id="2.30.30.30:FF:000012">
    <property type="entry name" value="Eukaryotic translation initiation factor 5A"/>
    <property type="match status" value="1"/>
</dbReference>
<dbReference type="FunFam" id="2.40.50.140:FF:000034">
    <property type="entry name" value="Eukaryotic translation initiation factor 5A"/>
    <property type="match status" value="1"/>
</dbReference>
<dbReference type="Gene3D" id="2.30.30.30">
    <property type="match status" value="1"/>
</dbReference>
<dbReference type="Gene3D" id="2.40.50.140">
    <property type="entry name" value="Nucleic acid-binding proteins"/>
    <property type="match status" value="1"/>
</dbReference>
<dbReference type="InterPro" id="IPR001884">
    <property type="entry name" value="IF5A-like"/>
</dbReference>
<dbReference type="InterPro" id="IPR048670">
    <property type="entry name" value="IF5A-like_N"/>
</dbReference>
<dbReference type="InterPro" id="IPR012340">
    <property type="entry name" value="NA-bd_OB-fold"/>
</dbReference>
<dbReference type="InterPro" id="IPR014722">
    <property type="entry name" value="Rib_uL2_dom2"/>
</dbReference>
<dbReference type="InterPro" id="IPR019769">
    <property type="entry name" value="Trans_elong_IF5A_hypusine_site"/>
</dbReference>
<dbReference type="InterPro" id="IPR020189">
    <property type="entry name" value="Transl_elong_IF5A_C"/>
</dbReference>
<dbReference type="InterPro" id="IPR008991">
    <property type="entry name" value="Translation_prot_SH3-like_sf"/>
</dbReference>
<dbReference type="NCBIfam" id="TIGR00037">
    <property type="entry name" value="eIF_5A"/>
    <property type="match status" value="1"/>
</dbReference>
<dbReference type="PANTHER" id="PTHR11673">
    <property type="entry name" value="TRANSLATION INITIATION FACTOR 5A FAMILY MEMBER"/>
    <property type="match status" value="1"/>
</dbReference>
<dbReference type="Pfam" id="PF01287">
    <property type="entry name" value="eIF-5a"/>
    <property type="match status" value="1"/>
</dbReference>
<dbReference type="Pfam" id="PF21485">
    <property type="entry name" value="IF5A-like_N"/>
    <property type="match status" value="1"/>
</dbReference>
<dbReference type="PIRSF" id="PIRSF003025">
    <property type="entry name" value="eIF5A"/>
    <property type="match status" value="1"/>
</dbReference>
<dbReference type="SMART" id="SM01376">
    <property type="entry name" value="eIF-5a"/>
    <property type="match status" value="1"/>
</dbReference>
<dbReference type="SUPFAM" id="SSF50249">
    <property type="entry name" value="Nucleic acid-binding proteins"/>
    <property type="match status" value="1"/>
</dbReference>
<dbReference type="SUPFAM" id="SSF50104">
    <property type="entry name" value="Translation proteins SH3-like domain"/>
    <property type="match status" value="1"/>
</dbReference>
<dbReference type="PROSITE" id="PS00302">
    <property type="entry name" value="IF5A_HYPUSINE"/>
    <property type="match status" value="1"/>
</dbReference>
<keyword id="KW-0385">Hypusine</keyword>
<keyword id="KW-0396">Initiation factor</keyword>
<keyword id="KW-0648">Protein biosynthesis</keyword>
<keyword id="KW-1185">Reference proteome</keyword>